<dbReference type="EMBL" id="Z27078">
    <property type="protein sequence ID" value="CAA81585.1"/>
    <property type="molecule type" value="Genomic_DNA"/>
</dbReference>
<dbReference type="PIR" id="S40995">
    <property type="entry name" value="S40995"/>
</dbReference>
<dbReference type="RefSeq" id="NP_499060.1">
    <property type="nucleotide sequence ID" value="NM_066659.6"/>
</dbReference>
<dbReference type="BioGRID" id="51719">
    <property type="interactions" value="1"/>
</dbReference>
<dbReference type="FunCoup" id="P34507">
    <property type="interactions" value="1523"/>
</dbReference>
<dbReference type="IntAct" id="P34507">
    <property type="interactions" value="1"/>
</dbReference>
<dbReference type="STRING" id="6239.K04H4.5.1"/>
<dbReference type="PaxDb" id="6239-K04H4.5"/>
<dbReference type="EnsemblMetazoa" id="K04H4.5.1">
    <property type="protein sequence ID" value="K04H4.5.1"/>
    <property type="gene ID" value="WBGene00010574"/>
</dbReference>
<dbReference type="EnsemblMetazoa" id="K04H4.5.2">
    <property type="protein sequence ID" value="K04H4.5.2"/>
    <property type="gene ID" value="WBGene00010574"/>
</dbReference>
<dbReference type="GeneID" id="187013"/>
<dbReference type="KEGG" id="cel:CELE_K04H4.5"/>
<dbReference type="UCSC" id="K04H4.5">
    <property type="organism name" value="c. elegans"/>
</dbReference>
<dbReference type="AGR" id="WB:WBGene00010574"/>
<dbReference type="CTD" id="187013"/>
<dbReference type="WormBase" id="K04H4.5">
    <property type="protein sequence ID" value="CE00250"/>
    <property type="gene ID" value="WBGene00010574"/>
</dbReference>
<dbReference type="eggNOG" id="ENOG502RA6N">
    <property type="taxonomic scope" value="Eukaryota"/>
</dbReference>
<dbReference type="HOGENOM" id="CLU_1112161_0_0_1"/>
<dbReference type="InParanoid" id="P34507"/>
<dbReference type="OMA" id="DYCGFES"/>
<dbReference type="OrthoDB" id="5839924at2759"/>
<dbReference type="PRO" id="PR:P34507"/>
<dbReference type="Proteomes" id="UP000001940">
    <property type="component" value="Chromosome III"/>
</dbReference>
<dbReference type="Bgee" id="WBGene00010574">
    <property type="expression patterns" value="Expressed in pharyngeal muscle cell (C elegans) and 3 other cell types or tissues"/>
</dbReference>
<gene>
    <name type="ORF">K04H4.5</name>
</gene>
<reference key="1">
    <citation type="journal article" date="1994" name="Nature">
        <title>2.2 Mb of contiguous nucleotide sequence from chromosome III of C. elegans.</title>
        <authorList>
            <person name="Wilson R."/>
            <person name="Ainscough R."/>
            <person name="Anderson K."/>
            <person name="Baynes C."/>
            <person name="Berks M."/>
            <person name="Bonfield J."/>
            <person name="Burton J."/>
            <person name="Connell M."/>
            <person name="Copsey T."/>
            <person name="Cooper J."/>
            <person name="Coulson A."/>
            <person name="Craxton M."/>
            <person name="Dear S."/>
            <person name="Du Z."/>
            <person name="Durbin R."/>
            <person name="Favello A."/>
            <person name="Fraser A."/>
            <person name="Fulton L."/>
            <person name="Gardner A."/>
            <person name="Green P."/>
            <person name="Hawkins T."/>
            <person name="Hillier L."/>
            <person name="Jier M."/>
            <person name="Johnston L."/>
            <person name="Jones M."/>
            <person name="Kershaw J."/>
            <person name="Kirsten J."/>
            <person name="Laisster N."/>
            <person name="Latreille P."/>
            <person name="Lightning J."/>
            <person name="Lloyd C."/>
            <person name="Mortimore B."/>
            <person name="O'Callaghan M."/>
            <person name="Parsons J."/>
            <person name="Percy C."/>
            <person name="Rifken L."/>
            <person name="Roopra A."/>
            <person name="Saunders D."/>
            <person name="Shownkeen R."/>
            <person name="Sims M."/>
            <person name="Smaldon N."/>
            <person name="Smith A."/>
            <person name="Smith M."/>
            <person name="Sonnhammer E."/>
            <person name="Staden R."/>
            <person name="Sulston J."/>
            <person name="Thierry-Mieg J."/>
            <person name="Thomas K."/>
            <person name="Vaudin M."/>
            <person name="Vaughan K."/>
            <person name="Waterston R."/>
            <person name="Watson A."/>
            <person name="Weinstock L."/>
            <person name="Wilkinson-Sproat J."/>
            <person name="Wohldman P."/>
        </authorList>
    </citation>
    <scope>NUCLEOTIDE SEQUENCE [LARGE SCALE GENOMIC DNA]</scope>
    <source>
        <strain>Bristol N2</strain>
    </source>
</reference>
<reference key="2">
    <citation type="journal article" date="1998" name="Science">
        <title>Genome sequence of the nematode C. elegans: a platform for investigating biology.</title>
        <authorList>
            <consortium name="The C. elegans sequencing consortium"/>
        </authorList>
    </citation>
    <scope>NUCLEOTIDE SEQUENCE [LARGE SCALE GENOMIC DNA]</scope>
    <source>
        <strain>Bristol N2</strain>
    </source>
</reference>
<feature type="chain" id="PRO_0000065401" description="Uncharacterized protein K04H4.5">
    <location>
        <begin position="1"/>
        <end position="251"/>
    </location>
</feature>
<name>YMV5_CAEEL</name>
<protein>
    <recommendedName>
        <fullName>Uncharacterized protein K04H4.5</fullName>
    </recommendedName>
</protein>
<organism>
    <name type="scientific">Caenorhabditis elegans</name>
    <dbReference type="NCBI Taxonomy" id="6239"/>
    <lineage>
        <taxon>Eukaryota</taxon>
        <taxon>Metazoa</taxon>
        <taxon>Ecdysozoa</taxon>
        <taxon>Nematoda</taxon>
        <taxon>Chromadorea</taxon>
        <taxon>Rhabditida</taxon>
        <taxon>Rhabditina</taxon>
        <taxon>Rhabditomorpha</taxon>
        <taxon>Rhabditoidea</taxon>
        <taxon>Rhabditidae</taxon>
        <taxon>Peloderinae</taxon>
        <taxon>Caenorhabditis</taxon>
    </lineage>
</organism>
<accession>P34507</accession>
<proteinExistence type="predicted"/>
<sequence length="251" mass="27881">MGYVESFYLEPEATQMFGMTESNDLPPLENLQELASVIDVNIKEPLVSDYCGLESDDIPPIYRAQLRAAQKEKIIAAEQADKSFYAYEKSDANLEGDKKEVEAIAPVDSMNFEYYVPGFSPPPQNFNDDVQKMSNFQLPKMTSIEATENVFKINGAHEKSQYVLMENEDPNKVNSPKKTGLESLISYTASDVTSTIASESSCLTATLGPAFGCLPITSTYDRHSESKYKGLSAFRPVTKSIESQYAMPELN</sequence>
<keyword id="KW-1185">Reference proteome</keyword>